<organism>
    <name type="scientific">Mus musculus</name>
    <name type="common">Mouse</name>
    <dbReference type="NCBI Taxonomy" id="10090"/>
    <lineage>
        <taxon>Eukaryota</taxon>
        <taxon>Metazoa</taxon>
        <taxon>Chordata</taxon>
        <taxon>Craniata</taxon>
        <taxon>Vertebrata</taxon>
        <taxon>Euteleostomi</taxon>
        <taxon>Mammalia</taxon>
        <taxon>Eutheria</taxon>
        <taxon>Euarchontoglires</taxon>
        <taxon>Glires</taxon>
        <taxon>Rodentia</taxon>
        <taxon>Myomorpha</taxon>
        <taxon>Muroidea</taxon>
        <taxon>Muridae</taxon>
        <taxon>Murinae</taxon>
        <taxon>Mus</taxon>
        <taxon>Mus</taxon>
    </lineage>
</organism>
<dbReference type="EC" id="2.3.2.27" evidence="7"/>
<dbReference type="EMBL" id="L27990">
    <property type="protein sequence ID" value="AAB51154.1"/>
    <property type="molecule type" value="mRNA"/>
</dbReference>
<dbReference type="PDB" id="2VOK">
    <property type="method" value="X-ray"/>
    <property type="resolution" value="1.30 A"/>
    <property type="chains" value="A/B=291-470"/>
</dbReference>
<dbReference type="PDB" id="3ZO0">
    <property type="method" value="X-ray"/>
    <property type="resolution" value="1.99 A"/>
    <property type="chains" value="B=291-470"/>
</dbReference>
<dbReference type="PDB" id="7HLA">
    <property type="method" value="X-ray"/>
    <property type="resolution" value="1.23 A"/>
    <property type="chains" value="B=291-470"/>
</dbReference>
<dbReference type="PDB" id="7HLB">
    <property type="method" value="X-ray"/>
    <property type="resolution" value="1.21 A"/>
    <property type="chains" value="B=291-470"/>
</dbReference>
<dbReference type="PDB" id="7HLC">
    <property type="method" value="X-ray"/>
    <property type="resolution" value="1.35 A"/>
    <property type="chains" value="B=291-470"/>
</dbReference>
<dbReference type="PDB" id="7HLD">
    <property type="method" value="X-ray"/>
    <property type="resolution" value="1.22 A"/>
    <property type="chains" value="B=291-470"/>
</dbReference>
<dbReference type="PDB" id="7HLE">
    <property type="method" value="X-ray"/>
    <property type="resolution" value="1.40 A"/>
    <property type="chains" value="B=291-470"/>
</dbReference>
<dbReference type="PDB" id="7HLF">
    <property type="method" value="X-ray"/>
    <property type="resolution" value="1.39 A"/>
    <property type="chains" value="B=291-470"/>
</dbReference>
<dbReference type="PDB" id="7HLG">
    <property type="method" value="X-ray"/>
    <property type="resolution" value="1.50 A"/>
    <property type="chains" value="B=291-470"/>
</dbReference>
<dbReference type="PDB" id="7HLH">
    <property type="method" value="X-ray"/>
    <property type="resolution" value="1.38 A"/>
    <property type="chains" value="B=291-470"/>
</dbReference>
<dbReference type="PDB" id="7HLI">
    <property type="method" value="X-ray"/>
    <property type="resolution" value="1.35 A"/>
    <property type="chains" value="B=291-470"/>
</dbReference>
<dbReference type="PDB" id="7HLJ">
    <property type="method" value="X-ray"/>
    <property type="resolution" value="1.37 A"/>
    <property type="chains" value="B=291-470"/>
</dbReference>
<dbReference type="PDB" id="7HLK">
    <property type="method" value="X-ray"/>
    <property type="resolution" value="1.39 A"/>
    <property type="chains" value="B=291-470"/>
</dbReference>
<dbReference type="PDB" id="7HLL">
    <property type="method" value="X-ray"/>
    <property type="resolution" value="1.15 A"/>
    <property type="chains" value="B=291-470"/>
</dbReference>
<dbReference type="PDB" id="7HLM">
    <property type="method" value="X-ray"/>
    <property type="resolution" value="1.15 A"/>
    <property type="chains" value="B=291-470"/>
</dbReference>
<dbReference type="PDB" id="7HLN">
    <property type="method" value="X-ray"/>
    <property type="resolution" value="1.20 A"/>
    <property type="chains" value="B=291-470"/>
</dbReference>
<dbReference type="PDB" id="7HLO">
    <property type="method" value="X-ray"/>
    <property type="resolution" value="1.15 A"/>
    <property type="chains" value="B=291-470"/>
</dbReference>
<dbReference type="PDB" id="7HLP">
    <property type="method" value="X-ray"/>
    <property type="resolution" value="1.19 A"/>
    <property type="chains" value="B=291-470"/>
</dbReference>
<dbReference type="PDB" id="7HLQ">
    <property type="method" value="X-ray"/>
    <property type="resolution" value="1.33 A"/>
    <property type="chains" value="B=291-470"/>
</dbReference>
<dbReference type="PDB" id="7HLR">
    <property type="method" value="X-ray"/>
    <property type="resolution" value="1.34 A"/>
    <property type="chains" value="B=291-470"/>
</dbReference>
<dbReference type="PDB" id="7HLS">
    <property type="method" value="X-ray"/>
    <property type="resolution" value="1.15 A"/>
    <property type="chains" value="B=291-470"/>
</dbReference>
<dbReference type="PDB" id="7HLT">
    <property type="method" value="X-ray"/>
    <property type="resolution" value="1.15 A"/>
    <property type="chains" value="B=291-470"/>
</dbReference>
<dbReference type="PDB" id="7HLU">
    <property type="method" value="X-ray"/>
    <property type="resolution" value="1.15 A"/>
    <property type="chains" value="B=291-470"/>
</dbReference>
<dbReference type="PDB" id="7HLV">
    <property type="method" value="X-ray"/>
    <property type="resolution" value="1.19 A"/>
    <property type="chains" value="B=291-470"/>
</dbReference>
<dbReference type="PDB" id="7HLW">
    <property type="method" value="X-ray"/>
    <property type="resolution" value="1.40 A"/>
    <property type="chains" value="B=291-470"/>
</dbReference>
<dbReference type="PDB" id="7HLX">
    <property type="method" value="X-ray"/>
    <property type="resolution" value="1.28 A"/>
    <property type="chains" value="B=291-470"/>
</dbReference>
<dbReference type="PDB" id="7HLY">
    <property type="method" value="X-ray"/>
    <property type="resolution" value="1.32 A"/>
    <property type="chains" value="B=291-470"/>
</dbReference>
<dbReference type="PDB" id="7HLZ">
    <property type="method" value="X-ray"/>
    <property type="resolution" value="1.29 A"/>
    <property type="chains" value="B=291-470"/>
</dbReference>
<dbReference type="PDB" id="7HM0">
    <property type="method" value="X-ray"/>
    <property type="resolution" value="1.43 A"/>
    <property type="chains" value="B=291-470"/>
</dbReference>
<dbReference type="PDB" id="7HM1">
    <property type="method" value="X-ray"/>
    <property type="resolution" value="1.34 A"/>
    <property type="chains" value="B=291-470"/>
</dbReference>
<dbReference type="PDB" id="7HM2">
    <property type="method" value="X-ray"/>
    <property type="resolution" value="1.15 A"/>
    <property type="chains" value="B=291-470"/>
</dbReference>
<dbReference type="PDB" id="7HM3">
    <property type="method" value="X-ray"/>
    <property type="resolution" value="1.23 A"/>
    <property type="chains" value="B=291-470"/>
</dbReference>
<dbReference type="PDB" id="7HM4">
    <property type="method" value="X-ray"/>
    <property type="resolution" value="1.42 A"/>
    <property type="chains" value="B=291-470"/>
</dbReference>
<dbReference type="PDB" id="7HM5">
    <property type="method" value="X-ray"/>
    <property type="resolution" value="1.38 A"/>
    <property type="chains" value="B=291-470"/>
</dbReference>
<dbReference type="PDB" id="7HM6">
    <property type="method" value="X-ray"/>
    <property type="resolution" value="1.33 A"/>
    <property type="chains" value="B=291-470"/>
</dbReference>
<dbReference type="PDB" id="7HM7">
    <property type="method" value="X-ray"/>
    <property type="resolution" value="1.34 A"/>
    <property type="chains" value="B=291-470"/>
</dbReference>
<dbReference type="PDB" id="7HM8">
    <property type="method" value="X-ray"/>
    <property type="resolution" value="1.33 A"/>
    <property type="chains" value="B=291-470"/>
</dbReference>
<dbReference type="PDB" id="7HM9">
    <property type="method" value="X-ray"/>
    <property type="resolution" value="1.25 A"/>
    <property type="chains" value="B=291-470"/>
</dbReference>
<dbReference type="PDB" id="7HMA">
    <property type="method" value="X-ray"/>
    <property type="resolution" value="1.15 A"/>
    <property type="chains" value="B=291-470"/>
</dbReference>
<dbReference type="PDB" id="7HMB">
    <property type="method" value="X-ray"/>
    <property type="resolution" value="1.36 A"/>
    <property type="chains" value="B=291-470"/>
</dbReference>
<dbReference type="PDB" id="7HMC">
    <property type="method" value="X-ray"/>
    <property type="resolution" value="1.32 A"/>
    <property type="chains" value="B=291-470"/>
</dbReference>
<dbReference type="PDB" id="7HMD">
    <property type="method" value="X-ray"/>
    <property type="resolution" value="1.29 A"/>
    <property type="chains" value="B=291-470"/>
</dbReference>
<dbReference type="PDB" id="7HME">
    <property type="method" value="X-ray"/>
    <property type="resolution" value="1.51 A"/>
    <property type="chains" value="B=291-470"/>
</dbReference>
<dbReference type="PDB" id="7HMF">
    <property type="method" value="X-ray"/>
    <property type="resolution" value="1.20 A"/>
    <property type="chains" value="B=291-470"/>
</dbReference>
<dbReference type="PDB" id="7HMG">
    <property type="method" value="X-ray"/>
    <property type="resolution" value="1.32 A"/>
    <property type="chains" value="B=291-470"/>
</dbReference>
<dbReference type="PDB" id="7HMH">
    <property type="method" value="X-ray"/>
    <property type="resolution" value="1.50 A"/>
    <property type="chains" value="B=291-470"/>
</dbReference>
<dbReference type="PDB" id="7HMI">
    <property type="method" value="X-ray"/>
    <property type="resolution" value="1.42 A"/>
    <property type="chains" value="B=291-470"/>
</dbReference>
<dbReference type="PDB" id="7HMJ">
    <property type="method" value="X-ray"/>
    <property type="resolution" value="1.50 A"/>
    <property type="chains" value="B=291-470"/>
</dbReference>
<dbReference type="PDB" id="7HMK">
    <property type="method" value="X-ray"/>
    <property type="resolution" value="1.35 A"/>
    <property type="chains" value="B=291-470"/>
</dbReference>
<dbReference type="PDB" id="7HML">
    <property type="method" value="X-ray"/>
    <property type="resolution" value="1.26 A"/>
    <property type="chains" value="B=291-470"/>
</dbReference>
<dbReference type="PDB" id="7HMM">
    <property type="method" value="X-ray"/>
    <property type="resolution" value="1.28 A"/>
    <property type="chains" value="B=291-470"/>
</dbReference>
<dbReference type="PDB" id="7HMN">
    <property type="method" value="X-ray"/>
    <property type="resolution" value="1.33 A"/>
    <property type="chains" value="B=291-470"/>
</dbReference>
<dbReference type="PDB" id="7HMO">
    <property type="method" value="X-ray"/>
    <property type="resolution" value="1.30 A"/>
    <property type="chains" value="B=291-470"/>
</dbReference>
<dbReference type="PDB" id="7HMP">
    <property type="method" value="X-ray"/>
    <property type="resolution" value="1.15 A"/>
    <property type="chains" value="B=291-470"/>
</dbReference>
<dbReference type="PDB" id="7HMQ">
    <property type="method" value="X-ray"/>
    <property type="resolution" value="1.43 A"/>
    <property type="chains" value="B=291-470"/>
</dbReference>
<dbReference type="PDB" id="7HMR">
    <property type="method" value="X-ray"/>
    <property type="resolution" value="1.15 A"/>
    <property type="chains" value="B=291-470"/>
</dbReference>
<dbReference type="PDB" id="7HMS">
    <property type="method" value="X-ray"/>
    <property type="resolution" value="1.15 A"/>
    <property type="chains" value="B=291-470"/>
</dbReference>
<dbReference type="PDB" id="7HMT">
    <property type="method" value="X-ray"/>
    <property type="resolution" value="1.28 A"/>
    <property type="chains" value="B=291-470"/>
</dbReference>
<dbReference type="PDB" id="7HMU">
    <property type="method" value="X-ray"/>
    <property type="resolution" value="1.15 A"/>
    <property type="chains" value="B=291-470"/>
</dbReference>
<dbReference type="PDB" id="7HMV">
    <property type="method" value="X-ray"/>
    <property type="resolution" value="1.15 A"/>
    <property type="chains" value="B=291-470"/>
</dbReference>
<dbReference type="PDB" id="7HMW">
    <property type="method" value="X-ray"/>
    <property type="resolution" value="1.34 A"/>
    <property type="chains" value="B=291-470"/>
</dbReference>
<dbReference type="PDB" id="7HMX">
    <property type="method" value="X-ray"/>
    <property type="resolution" value="1.57 A"/>
    <property type="chains" value="B=291-470"/>
</dbReference>
<dbReference type="PDB" id="7HMY">
    <property type="method" value="X-ray"/>
    <property type="resolution" value="1.15 A"/>
    <property type="chains" value="B=291-470"/>
</dbReference>
<dbReference type="PDB" id="7HMZ">
    <property type="method" value="X-ray"/>
    <property type="resolution" value="1.28 A"/>
    <property type="chains" value="B=291-470"/>
</dbReference>
<dbReference type="PDB" id="7HN0">
    <property type="method" value="X-ray"/>
    <property type="resolution" value="1.33 A"/>
    <property type="chains" value="B=291-470"/>
</dbReference>
<dbReference type="PDB" id="7HN1">
    <property type="method" value="X-ray"/>
    <property type="resolution" value="1.47 A"/>
    <property type="chains" value="B=291-470"/>
</dbReference>
<dbReference type="PDB" id="7HN2">
    <property type="method" value="X-ray"/>
    <property type="resolution" value="1.23 A"/>
    <property type="chains" value="B=291-470"/>
</dbReference>
<dbReference type="PDB" id="7HN3">
    <property type="method" value="X-ray"/>
    <property type="resolution" value="1.28 A"/>
    <property type="chains" value="B=291-470"/>
</dbReference>
<dbReference type="PDB" id="7HN4">
    <property type="method" value="X-ray"/>
    <property type="resolution" value="1.19 A"/>
    <property type="chains" value="B=291-470"/>
</dbReference>
<dbReference type="PDB" id="7HN5">
    <property type="method" value="X-ray"/>
    <property type="resolution" value="1.32 A"/>
    <property type="chains" value="B=291-470"/>
</dbReference>
<dbReference type="PDB" id="7HN6">
    <property type="method" value="X-ray"/>
    <property type="resolution" value="1.40 A"/>
    <property type="chains" value="B=291-470"/>
</dbReference>
<dbReference type="PDB" id="7HN7">
    <property type="method" value="X-ray"/>
    <property type="resolution" value="1.31 A"/>
    <property type="chains" value="B=291-470"/>
</dbReference>
<dbReference type="PDB" id="7HN8">
    <property type="method" value="X-ray"/>
    <property type="resolution" value="1.23 A"/>
    <property type="chains" value="B=291-470"/>
</dbReference>
<dbReference type="PDB" id="7HN9">
    <property type="method" value="X-ray"/>
    <property type="resolution" value="1.22 A"/>
    <property type="chains" value="B=291-470"/>
</dbReference>
<dbReference type="PDB" id="7HNA">
    <property type="method" value="X-ray"/>
    <property type="resolution" value="1.29 A"/>
    <property type="chains" value="B=291-470"/>
</dbReference>
<dbReference type="PDB" id="7HNB">
    <property type="method" value="X-ray"/>
    <property type="resolution" value="1.52 A"/>
    <property type="chains" value="B=291-470"/>
</dbReference>
<dbReference type="PDB" id="7HNC">
    <property type="method" value="X-ray"/>
    <property type="resolution" value="1.15 A"/>
    <property type="chains" value="B=291-470"/>
</dbReference>
<dbReference type="PDB" id="7HND">
    <property type="method" value="X-ray"/>
    <property type="resolution" value="1.34 A"/>
    <property type="chains" value="B=291-470"/>
</dbReference>
<dbReference type="PDB" id="7HNE">
    <property type="method" value="X-ray"/>
    <property type="resolution" value="1.33 A"/>
    <property type="chains" value="B=291-470"/>
</dbReference>
<dbReference type="PDB" id="7HNF">
    <property type="method" value="X-ray"/>
    <property type="resolution" value="1.32 A"/>
    <property type="chains" value="B=291-470"/>
</dbReference>
<dbReference type="PDB" id="7HNG">
    <property type="method" value="X-ray"/>
    <property type="resolution" value="1.34 A"/>
    <property type="chains" value="B=291-470"/>
</dbReference>
<dbReference type="PDB" id="7HNH">
    <property type="method" value="X-ray"/>
    <property type="resolution" value="1.34 A"/>
    <property type="chains" value="B=291-470"/>
</dbReference>
<dbReference type="PDB" id="7HNI">
    <property type="method" value="X-ray"/>
    <property type="resolution" value="1.27 A"/>
    <property type="chains" value="B=291-470"/>
</dbReference>
<dbReference type="PDB" id="7HNJ">
    <property type="method" value="X-ray"/>
    <property type="resolution" value="1.43 A"/>
    <property type="chains" value="B=291-470"/>
</dbReference>
<dbReference type="PDB" id="7HNK">
    <property type="method" value="X-ray"/>
    <property type="resolution" value="1.39 A"/>
    <property type="chains" value="B=291-470"/>
</dbReference>
<dbReference type="PDB" id="7HNL">
    <property type="method" value="X-ray"/>
    <property type="resolution" value="1.44 A"/>
    <property type="chains" value="B=291-470"/>
</dbReference>
<dbReference type="PDB" id="7HNM">
    <property type="method" value="X-ray"/>
    <property type="resolution" value="1.49 A"/>
    <property type="chains" value="B=291-470"/>
</dbReference>
<dbReference type="PDB" id="7HNN">
    <property type="method" value="X-ray"/>
    <property type="resolution" value="1.31 A"/>
    <property type="chains" value="B=291-470"/>
</dbReference>
<dbReference type="PDB" id="7HNO">
    <property type="method" value="X-ray"/>
    <property type="resolution" value="1.33 A"/>
    <property type="chains" value="B=291-470"/>
</dbReference>
<dbReference type="PDB" id="7HNP">
    <property type="method" value="X-ray"/>
    <property type="resolution" value="1.30 A"/>
    <property type="chains" value="B=291-470"/>
</dbReference>
<dbReference type="PDB" id="7HNQ">
    <property type="method" value="X-ray"/>
    <property type="resolution" value="1.37 A"/>
    <property type="chains" value="B=291-470"/>
</dbReference>
<dbReference type="PDB" id="7HNR">
    <property type="method" value="X-ray"/>
    <property type="resolution" value="1.30 A"/>
    <property type="chains" value="B=291-470"/>
</dbReference>
<dbReference type="PDB" id="7HNS">
    <property type="method" value="X-ray"/>
    <property type="resolution" value="1.29 A"/>
    <property type="chains" value="B=291-470"/>
</dbReference>
<dbReference type="PDB" id="7HNT">
    <property type="method" value="X-ray"/>
    <property type="resolution" value="1.17 A"/>
    <property type="chains" value="B=291-470"/>
</dbReference>
<dbReference type="PDB" id="7HNU">
    <property type="method" value="X-ray"/>
    <property type="resolution" value="1.15 A"/>
    <property type="chains" value="B=291-470"/>
</dbReference>
<dbReference type="PDB" id="7HNV">
    <property type="method" value="X-ray"/>
    <property type="resolution" value="1.34 A"/>
    <property type="chains" value="B=291-470"/>
</dbReference>
<dbReference type="PDB" id="7HNW">
    <property type="method" value="X-ray"/>
    <property type="resolution" value="1.21 A"/>
    <property type="chains" value="B=291-470"/>
</dbReference>
<dbReference type="PDB" id="7HNX">
    <property type="method" value="X-ray"/>
    <property type="resolution" value="1.27 A"/>
    <property type="chains" value="B=291-470"/>
</dbReference>
<dbReference type="PDB" id="7HNY">
    <property type="method" value="X-ray"/>
    <property type="resolution" value="1.28 A"/>
    <property type="chains" value="B=291-470"/>
</dbReference>
<dbReference type="PDB" id="7HNZ">
    <property type="method" value="X-ray"/>
    <property type="resolution" value="1.15 A"/>
    <property type="chains" value="B=291-470"/>
</dbReference>
<dbReference type="PDB" id="7HO0">
    <property type="method" value="X-ray"/>
    <property type="resolution" value="1.15 A"/>
    <property type="chains" value="B=291-470"/>
</dbReference>
<dbReference type="PDB" id="7HO1">
    <property type="method" value="X-ray"/>
    <property type="resolution" value="1.17 A"/>
    <property type="chains" value="B=291-470"/>
</dbReference>
<dbReference type="PDB" id="7HO2">
    <property type="method" value="X-ray"/>
    <property type="resolution" value="1.15 A"/>
    <property type="chains" value="B=291-470"/>
</dbReference>
<dbReference type="PDB" id="7HO3">
    <property type="method" value="X-ray"/>
    <property type="resolution" value="1.45 A"/>
    <property type="chains" value="B=291-470"/>
</dbReference>
<dbReference type="PDB" id="7HO4">
    <property type="method" value="X-ray"/>
    <property type="resolution" value="1.21 A"/>
    <property type="chains" value="B=291-470"/>
</dbReference>
<dbReference type="PDB" id="7HO5">
    <property type="method" value="X-ray"/>
    <property type="resolution" value="1.18 A"/>
    <property type="chains" value="B=291-470"/>
</dbReference>
<dbReference type="PDB" id="7HO6">
    <property type="method" value="X-ray"/>
    <property type="resolution" value="1.24 A"/>
    <property type="chains" value="B=291-470"/>
</dbReference>
<dbReference type="PDB" id="7HO7">
    <property type="method" value="X-ray"/>
    <property type="resolution" value="1.30 A"/>
    <property type="chains" value="B=291-470"/>
</dbReference>
<dbReference type="PDB" id="7HO8">
    <property type="method" value="X-ray"/>
    <property type="resolution" value="1.39 A"/>
    <property type="chains" value="B=291-470"/>
</dbReference>
<dbReference type="PDB" id="7HO9">
    <property type="method" value="X-ray"/>
    <property type="resolution" value="1.26 A"/>
    <property type="chains" value="B=291-470"/>
</dbReference>
<dbReference type="PDB" id="7HOA">
    <property type="method" value="X-ray"/>
    <property type="resolution" value="1.35 A"/>
    <property type="chains" value="B=291-470"/>
</dbReference>
<dbReference type="PDB" id="7HOB">
    <property type="method" value="X-ray"/>
    <property type="resolution" value="1.15 A"/>
    <property type="chains" value="B=291-470"/>
</dbReference>
<dbReference type="PDB" id="9GTE">
    <property type="method" value="X-ray"/>
    <property type="resolution" value="1.30 A"/>
    <property type="chains" value="B=291-470"/>
</dbReference>
<dbReference type="PDBsum" id="2VOK"/>
<dbReference type="PDBsum" id="3ZO0"/>
<dbReference type="PDBsum" id="7HLA"/>
<dbReference type="PDBsum" id="7HLB"/>
<dbReference type="PDBsum" id="7HLC"/>
<dbReference type="PDBsum" id="7HLD"/>
<dbReference type="PDBsum" id="7HLE"/>
<dbReference type="PDBsum" id="7HLF"/>
<dbReference type="PDBsum" id="7HLG"/>
<dbReference type="PDBsum" id="7HLH"/>
<dbReference type="PDBsum" id="7HLI"/>
<dbReference type="PDBsum" id="7HLJ"/>
<dbReference type="PDBsum" id="7HLK"/>
<dbReference type="PDBsum" id="7HLL"/>
<dbReference type="PDBsum" id="7HLM"/>
<dbReference type="PDBsum" id="7HLN"/>
<dbReference type="PDBsum" id="7HLO"/>
<dbReference type="PDBsum" id="7HLP"/>
<dbReference type="PDBsum" id="7HLQ"/>
<dbReference type="PDBsum" id="7HLR"/>
<dbReference type="PDBsum" id="7HLS"/>
<dbReference type="PDBsum" id="7HLT"/>
<dbReference type="PDBsum" id="7HLU"/>
<dbReference type="PDBsum" id="7HLV"/>
<dbReference type="PDBsum" id="7HLW"/>
<dbReference type="PDBsum" id="7HLX"/>
<dbReference type="PDBsum" id="7HLY"/>
<dbReference type="PDBsum" id="7HLZ"/>
<dbReference type="PDBsum" id="7HM0"/>
<dbReference type="PDBsum" id="7HM1"/>
<dbReference type="PDBsum" id="7HM2"/>
<dbReference type="PDBsum" id="7HM3"/>
<dbReference type="PDBsum" id="7HM4"/>
<dbReference type="PDBsum" id="7HM5"/>
<dbReference type="PDBsum" id="7HM6"/>
<dbReference type="PDBsum" id="7HM7"/>
<dbReference type="PDBsum" id="7HM8"/>
<dbReference type="PDBsum" id="7HM9"/>
<dbReference type="PDBsum" id="7HMA"/>
<dbReference type="PDBsum" id="7HMB"/>
<dbReference type="PDBsum" id="7HMC"/>
<dbReference type="PDBsum" id="7HMD"/>
<dbReference type="PDBsum" id="7HME"/>
<dbReference type="PDBsum" id="7HMF"/>
<dbReference type="PDBsum" id="7HMG"/>
<dbReference type="PDBsum" id="7HMH"/>
<dbReference type="PDBsum" id="7HMI"/>
<dbReference type="PDBsum" id="7HMJ"/>
<dbReference type="PDBsum" id="7HMK"/>
<dbReference type="PDBsum" id="7HML"/>
<dbReference type="PDBsum" id="7HMM"/>
<dbReference type="PDBsum" id="7HMN"/>
<dbReference type="PDBsum" id="7HMO"/>
<dbReference type="PDBsum" id="7HMP"/>
<dbReference type="PDBsum" id="7HMQ"/>
<dbReference type="PDBsum" id="7HMR"/>
<dbReference type="PDBsum" id="7HMS"/>
<dbReference type="PDBsum" id="7HMT"/>
<dbReference type="PDBsum" id="7HMU"/>
<dbReference type="PDBsum" id="7HMV"/>
<dbReference type="PDBsum" id="7HMW"/>
<dbReference type="PDBsum" id="7HMX"/>
<dbReference type="PDBsum" id="7HMY"/>
<dbReference type="PDBsum" id="7HMZ"/>
<dbReference type="PDBsum" id="7HN0"/>
<dbReference type="PDBsum" id="7HN1"/>
<dbReference type="PDBsum" id="7HN2"/>
<dbReference type="PDBsum" id="7HN3"/>
<dbReference type="PDBsum" id="7HN4"/>
<dbReference type="PDBsum" id="7HN5"/>
<dbReference type="PDBsum" id="7HN6"/>
<dbReference type="PDBsum" id="7HN7"/>
<dbReference type="PDBsum" id="7HN8"/>
<dbReference type="PDBsum" id="7HN9"/>
<dbReference type="PDBsum" id="7HNA"/>
<dbReference type="PDBsum" id="7HNB"/>
<dbReference type="PDBsum" id="7HNC"/>
<dbReference type="PDBsum" id="7HND"/>
<dbReference type="PDBsum" id="7HNE"/>
<dbReference type="PDBsum" id="7HNF"/>
<dbReference type="PDBsum" id="7HNG"/>
<dbReference type="PDBsum" id="7HNH"/>
<dbReference type="PDBsum" id="7HNI"/>
<dbReference type="PDBsum" id="7HNJ"/>
<dbReference type="PDBsum" id="7HNK"/>
<dbReference type="PDBsum" id="7HNL"/>
<dbReference type="PDBsum" id="7HNM"/>
<dbReference type="PDBsum" id="7HNN"/>
<dbReference type="PDBsum" id="7HNO"/>
<dbReference type="PDBsum" id="7HNP"/>
<dbReference type="PDBsum" id="7HNQ"/>
<dbReference type="PDBsum" id="7HNR"/>
<dbReference type="PDBsum" id="7HNS"/>
<dbReference type="PDBsum" id="7HNT"/>
<dbReference type="PDBsum" id="7HNU"/>
<dbReference type="PDBsum" id="7HNV"/>
<dbReference type="PDBsum" id="7HNW"/>
<dbReference type="PDBsum" id="7HNX"/>
<dbReference type="PDBsum" id="7HNY"/>
<dbReference type="PDBsum" id="7HNZ"/>
<dbReference type="PDBsum" id="7HO0"/>
<dbReference type="PDBsum" id="7HO1"/>
<dbReference type="PDBsum" id="7HO2"/>
<dbReference type="PDBsum" id="7HO3"/>
<dbReference type="PDBsum" id="7HO4"/>
<dbReference type="PDBsum" id="7HO5"/>
<dbReference type="PDBsum" id="7HO6"/>
<dbReference type="PDBsum" id="7HO7"/>
<dbReference type="PDBsum" id="7HO8"/>
<dbReference type="PDBsum" id="7HO9"/>
<dbReference type="PDBsum" id="7HOA"/>
<dbReference type="PDBsum" id="7HOB"/>
<dbReference type="PDBsum" id="9GTE"/>
<dbReference type="SMR" id="Q62191"/>
<dbReference type="FunCoup" id="Q62191">
    <property type="interactions" value="430"/>
</dbReference>
<dbReference type="IntAct" id="Q62191">
    <property type="interactions" value="24"/>
</dbReference>
<dbReference type="STRING" id="10090.ENSMUSP00000033264"/>
<dbReference type="PhosphoSitePlus" id="Q62191"/>
<dbReference type="PaxDb" id="10090-ENSMUSP00000033264"/>
<dbReference type="PeptideAtlas" id="Q62191"/>
<dbReference type="ProteomicsDB" id="301631"/>
<dbReference type="Pumba" id="Q62191"/>
<dbReference type="AGR" id="MGI:106657"/>
<dbReference type="MGI" id="MGI:106657">
    <property type="gene designation" value="Trim21"/>
</dbReference>
<dbReference type="eggNOG" id="KOG2177">
    <property type="taxonomic scope" value="Eukaryota"/>
</dbReference>
<dbReference type="InParanoid" id="Q62191"/>
<dbReference type="PhylomeDB" id="Q62191"/>
<dbReference type="Reactome" id="R-MMU-3134975">
    <property type="pathway name" value="Regulation of innate immune responses to cytosolic DNA"/>
</dbReference>
<dbReference type="Reactome" id="R-MMU-9755511">
    <property type="pathway name" value="KEAP1-NFE2L2 pathway"/>
</dbReference>
<dbReference type="Reactome" id="R-MMU-983168">
    <property type="pathway name" value="Antigen processing: Ubiquitination &amp; Proteasome degradation"/>
</dbReference>
<dbReference type="UniPathway" id="UPA00143"/>
<dbReference type="ChiTaRS" id="Trim21">
    <property type="organism name" value="mouse"/>
</dbReference>
<dbReference type="EvolutionaryTrace" id="Q62191"/>
<dbReference type="PRO" id="PR:Q62191"/>
<dbReference type="Proteomes" id="UP000000589">
    <property type="component" value="Unplaced"/>
</dbReference>
<dbReference type="RNAct" id="Q62191">
    <property type="molecule type" value="protein"/>
</dbReference>
<dbReference type="GO" id="GO:0005776">
    <property type="term" value="C:autophagosome"/>
    <property type="evidence" value="ECO:0007669"/>
    <property type="project" value="UniProtKB-SubCell"/>
</dbReference>
<dbReference type="GO" id="GO:0005737">
    <property type="term" value="C:cytoplasm"/>
    <property type="evidence" value="ECO:0000314"/>
    <property type="project" value="MGI"/>
</dbReference>
<dbReference type="GO" id="GO:0010494">
    <property type="term" value="C:cytoplasmic stress granule"/>
    <property type="evidence" value="ECO:0000250"/>
    <property type="project" value="UniProtKB"/>
</dbReference>
<dbReference type="GO" id="GO:0031410">
    <property type="term" value="C:cytoplasmic vesicle"/>
    <property type="evidence" value="ECO:0007669"/>
    <property type="project" value="UniProtKB-KW"/>
</dbReference>
<dbReference type="GO" id="GO:0005634">
    <property type="term" value="C:nucleus"/>
    <property type="evidence" value="ECO:0000250"/>
    <property type="project" value="UniProtKB"/>
</dbReference>
<dbReference type="GO" id="GO:0000932">
    <property type="term" value="C:P-body"/>
    <property type="evidence" value="ECO:0007669"/>
    <property type="project" value="UniProtKB-SubCell"/>
</dbReference>
<dbReference type="GO" id="GO:1990904">
    <property type="term" value="C:ribonucleoprotein complex"/>
    <property type="evidence" value="ECO:0007669"/>
    <property type="project" value="UniProtKB-KW"/>
</dbReference>
<dbReference type="GO" id="GO:0003677">
    <property type="term" value="F:DNA binding"/>
    <property type="evidence" value="ECO:0007669"/>
    <property type="project" value="UniProtKB-KW"/>
</dbReference>
<dbReference type="GO" id="GO:0003723">
    <property type="term" value="F:RNA binding"/>
    <property type="evidence" value="ECO:0007669"/>
    <property type="project" value="UniProtKB-KW"/>
</dbReference>
<dbReference type="GO" id="GO:0061630">
    <property type="term" value="F:ubiquitin protein ligase activity"/>
    <property type="evidence" value="ECO:0000250"/>
    <property type="project" value="UniProtKB"/>
</dbReference>
<dbReference type="GO" id="GO:0004842">
    <property type="term" value="F:ubiquitin-protein transferase activity"/>
    <property type="evidence" value="ECO:0000250"/>
    <property type="project" value="UniProtKB"/>
</dbReference>
<dbReference type="GO" id="GO:0008270">
    <property type="term" value="F:zinc ion binding"/>
    <property type="evidence" value="ECO:0007669"/>
    <property type="project" value="UniProtKB-KW"/>
</dbReference>
<dbReference type="GO" id="GO:0045824">
    <property type="term" value="P:negative regulation of innate immune response"/>
    <property type="evidence" value="ECO:0000250"/>
    <property type="project" value="UniProtKB"/>
</dbReference>
<dbReference type="GO" id="GO:0032088">
    <property type="term" value="P:negative regulation of NF-kappaB transcription factor activity"/>
    <property type="evidence" value="ECO:0000250"/>
    <property type="project" value="UniProtKB"/>
</dbReference>
<dbReference type="GO" id="GO:0090086">
    <property type="term" value="P:negative regulation of protein deubiquitination"/>
    <property type="evidence" value="ECO:0000250"/>
    <property type="project" value="UniProtKB"/>
</dbReference>
<dbReference type="GO" id="GO:0010508">
    <property type="term" value="P:positive regulation of autophagy"/>
    <property type="evidence" value="ECO:0000250"/>
    <property type="project" value="UniProtKB"/>
</dbReference>
<dbReference type="GO" id="GO:0045787">
    <property type="term" value="P:positive regulation of cell cycle"/>
    <property type="evidence" value="ECO:0000250"/>
    <property type="project" value="UniProtKB"/>
</dbReference>
<dbReference type="GO" id="GO:0032092">
    <property type="term" value="P:positive regulation of protein binding"/>
    <property type="evidence" value="ECO:0000250"/>
    <property type="project" value="UniProtKB"/>
</dbReference>
<dbReference type="GO" id="GO:0051865">
    <property type="term" value="P:protein autoubiquitination"/>
    <property type="evidence" value="ECO:0000250"/>
    <property type="project" value="UniProtKB"/>
</dbReference>
<dbReference type="GO" id="GO:0031648">
    <property type="term" value="P:protein destabilization"/>
    <property type="evidence" value="ECO:0000250"/>
    <property type="project" value="UniProtKB"/>
</dbReference>
<dbReference type="GO" id="GO:0070534">
    <property type="term" value="P:protein K63-linked ubiquitination"/>
    <property type="evidence" value="ECO:0000250"/>
    <property type="project" value="UniProtKB"/>
</dbReference>
<dbReference type="GO" id="GO:0006513">
    <property type="term" value="P:protein monoubiquitination"/>
    <property type="evidence" value="ECO:0000250"/>
    <property type="project" value="UniProtKB"/>
</dbReference>
<dbReference type="GO" id="GO:0000209">
    <property type="term" value="P:protein polyubiquitination"/>
    <property type="evidence" value="ECO:0000250"/>
    <property type="project" value="UniProtKB"/>
</dbReference>
<dbReference type="GO" id="GO:0016567">
    <property type="term" value="P:protein ubiquitination"/>
    <property type="evidence" value="ECO:0000250"/>
    <property type="project" value="UniProtKB"/>
</dbReference>
<dbReference type="GO" id="GO:0034341">
    <property type="term" value="P:response to type II interferon"/>
    <property type="evidence" value="ECO:0000250"/>
    <property type="project" value="UniProtKB"/>
</dbReference>
<dbReference type="GO" id="GO:0035617">
    <property type="term" value="P:stress granule disassembly"/>
    <property type="evidence" value="ECO:0000250"/>
    <property type="project" value="UniProtKB"/>
</dbReference>
<dbReference type="CDD" id="cd16596">
    <property type="entry name" value="RING-HC_TRIM21_C-IV"/>
    <property type="match status" value="1"/>
</dbReference>
<dbReference type="CDD" id="cd12900">
    <property type="entry name" value="SPRY_PRY_TRIM21"/>
    <property type="match status" value="1"/>
</dbReference>
<dbReference type="FunFam" id="2.60.120.920:FF:000004">
    <property type="entry name" value="Butyrophilin subfamily 1 member A1"/>
    <property type="match status" value="1"/>
</dbReference>
<dbReference type="FunFam" id="3.30.40.10:FF:000144">
    <property type="entry name" value="Tripartite motif-containing 5 (Predicted)"/>
    <property type="match status" value="1"/>
</dbReference>
<dbReference type="Gene3D" id="2.60.120.920">
    <property type="match status" value="1"/>
</dbReference>
<dbReference type="Gene3D" id="3.30.160.60">
    <property type="entry name" value="Classic Zinc Finger"/>
    <property type="match status" value="1"/>
</dbReference>
<dbReference type="Gene3D" id="3.30.40.10">
    <property type="entry name" value="Zinc/RING finger domain, C3HC4 (zinc finger)"/>
    <property type="match status" value="1"/>
</dbReference>
<dbReference type="InterPro" id="IPR001870">
    <property type="entry name" value="B30.2/SPRY"/>
</dbReference>
<dbReference type="InterPro" id="IPR043136">
    <property type="entry name" value="B30.2/SPRY_sf"/>
</dbReference>
<dbReference type="InterPro" id="IPR003879">
    <property type="entry name" value="Butyrophylin_SPRY"/>
</dbReference>
<dbReference type="InterPro" id="IPR013320">
    <property type="entry name" value="ConA-like_dom_sf"/>
</dbReference>
<dbReference type="InterPro" id="IPR006574">
    <property type="entry name" value="PRY"/>
</dbReference>
<dbReference type="InterPro" id="IPR035831">
    <property type="entry name" value="PRY/SPRY_TRIM21"/>
</dbReference>
<dbReference type="InterPro" id="IPR003877">
    <property type="entry name" value="SPRY_dom"/>
</dbReference>
<dbReference type="InterPro" id="IPR050143">
    <property type="entry name" value="TRIM/RBCC"/>
</dbReference>
<dbReference type="InterPro" id="IPR000315">
    <property type="entry name" value="Znf_B-box"/>
</dbReference>
<dbReference type="InterPro" id="IPR020457">
    <property type="entry name" value="Znf_B-box_chordata"/>
</dbReference>
<dbReference type="InterPro" id="IPR018957">
    <property type="entry name" value="Znf_C3HC4_RING-type"/>
</dbReference>
<dbReference type="InterPro" id="IPR001841">
    <property type="entry name" value="Znf_RING"/>
</dbReference>
<dbReference type="InterPro" id="IPR013083">
    <property type="entry name" value="Znf_RING/FYVE/PHD"/>
</dbReference>
<dbReference type="InterPro" id="IPR017907">
    <property type="entry name" value="Znf_RING_CS"/>
</dbReference>
<dbReference type="PANTHER" id="PTHR24103">
    <property type="entry name" value="E3 UBIQUITIN-PROTEIN LIGASE TRIM"/>
    <property type="match status" value="1"/>
</dbReference>
<dbReference type="Pfam" id="PF13765">
    <property type="entry name" value="PRY"/>
    <property type="match status" value="1"/>
</dbReference>
<dbReference type="Pfam" id="PF00622">
    <property type="entry name" value="SPRY"/>
    <property type="match status" value="1"/>
</dbReference>
<dbReference type="Pfam" id="PF00643">
    <property type="entry name" value="zf-B_box"/>
    <property type="match status" value="1"/>
</dbReference>
<dbReference type="Pfam" id="PF00097">
    <property type="entry name" value="zf-C3HC4"/>
    <property type="match status" value="1"/>
</dbReference>
<dbReference type="PRINTS" id="PR01406">
    <property type="entry name" value="BBOXZNFINGER"/>
</dbReference>
<dbReference type="PRINTS" id="PR01407">
    <property type="entry name" value="BUTYPHLNCDUF"/>
</dbReference>
<dbReference type="SMART" id="SM00336">
    <property type="entry name" value="BBOX"/>
    <property type="match status" value="1"/>
</dbReference>
<dbReference type="SMART" id="SM00589">
    <property type="entry name" value="PRY"/>
    <property type="match status" value="1"/>
</dbReference>
<dbReference type="SMART" id="SM00184">
    <property type="entry name" value="RING"/>
    <property type="match status" value="1"/>
</dbReference>
<dbReference type="SMART" id="SM00449">
    <property type="entry name" value="SPRY"/>
    <property type="match status" value="1"/>
</dbReference>
<dbReference type="SUPFAM" id="SSF57845">
    <property type="entry name" value="B-box zinc-binding domain"/>
    <property type="match status" value="1"/>
</dbReference>
<dbReference type="SUPFAM" id="SSF49899">
    <property type="entry name" value="Concanavalin A-like lectins/glucanases"/>
    <property type="match status" value="1"/>
</dbReference>
<dbReference type="SUPFAM" id="SSF57850">
    <property type="entry name" value="RING/U-box"/>
    <property type="match status" value="1"/>
</dbReference>
<dbReference type="PROSITE" id="PS50188">
    <property type="entry name" value="B302_SPRY"/>
    <property type="match status" value="1"/>
</dbReference>
<dbReference type="PROSITE" id="PS50119">
    <property type="entry name" value="ZF_BBOX"/>
    <property type="match status" value="1"/>
</dbReference>
<dbReference type="PROSITE" id="PS00518">
    <property type="entry name" value="ZF_RING_1"/>
    <property type="match status" value="1"/>
</dbReference>
<dbReference type="PROSITE" id="PS50089">
    <property type="entry name" value="ZF_RING_2"/>
    <property type="match status" value="1"/>
</dbReference>
<name>RO52_MOUSE</name>
<evidence type="ECO:0000250" key="1"/>
<evidence type="ECO:0000250" key="2">
    <source>
        <dbReference type="UniProtKB" id="P19474"/>
    </source>
</evidence>
<evidence type="ECO:0000255" key="3"/>
<evidence type="ECO:0000255" key="4">
    <source>
        <dbReference type="PROSITE-ProRule" id="PRU00024"/>
    </source>
</evidence>
<evidence type="ECO:0000255" key="5">
    <source>
        <dbReference type="PROSITE-ProRule" id="PRU00175"/>
    </source>
</evidence>
<evidence type="ECO:0000255" key="6">
    <source>
        <dbReference type="PROSITE-ProRule" id="PRU00548"/>
    </source>
</evidence>
<evidence type="ECO:0000269" key="7">
    <source>
    </source>
</evidence>
<evidence type="ECO:0000305" key="8"/>
<evidence type="ECO:0007829" key="9">
    <source>
        <dbReference type="PDB" id="2VOK"/>
    </source>
</evidence>
<evidence type="ECO:0007829" key="10">
    <source>
        <dbReference type="PDB" id="7HLL"/>
    </source>
</evidence>
<evidence type="ECO:0007829" key="11">
    <source>
        <dbReference type="PDB" id="7HMO"/>
    </source>
</evidence>
<evidence type="ECO:0007829" key="12">
    <source>
        <dbReference type="PDB" id="7HMP"/>
    </source>
</evidence>
<gene>
    <name type="primary">Trim21</name>
    <name type="synonym">Ro52</name>
    <name type="synonym">Ssa1</name>
</gene>
<sequence length="470" mass="54175">MSPSTTSKMSLEKMWEEVTCSICLDPMVEPMSIECGHCFCKECIFEVGKNGGSSCPECRQQFLLRNLRPNRHIANMVENLKQIAQNTKKSTQETHCMKHGEKLHLFCEEDGQALCWVCAQSGKHRDHTRVPIEEAAKVYQEKIHVVLEKLRKGKELAEKMEMDLTMQRTDWKRNIDTQKSRIHAEFALQNSLLAQEEQRQLQRLEKDQREYLRLLGKKEAELAEKNQALQELISELERRIRGSELELLQEVRIILERSGSWNLDTLDIDAPDLTSTCPVPGRKKMLRTCWVHITLDRNTANSWLIISKDRRQVRMGDTHQNVSDNKERFSNYPMVLGAQRFSSGKMYWEVDVTQKEAWDLGVCRDSVQRKGQFSLSPENGFWTIWLWQDSYEAGTSPQTTLHIQVPPCQIGIFVDYEAGVVSFYNITDHGSLIYTFSECVFAGPLRPFFNVGFNYSGGNAAPLKLCPLKM</sequence>
<keyword id="KW-0002">3D-structure</keyword>
<keyword id="KW-0131">Cell cycle</keyword>
<keyword id="KW-0175">Coiled coil</keyword>
<keyword id="KW-0963">Cytoplasm</keyword>
<keyword id="KW-0968">Cytoplasmic vesicle</keyword>
<keyword id="KW-0903">Direct protein sequencing</keyword>
<keyword id="KW-0238">DNA-binding</keyword>
<keyword id="KW-0479">Metal-binding</keyword>
<keyword id="KW-0539">Nucleus</keyword>
<keyword id="KW-1185">Reference proteome</keyword>
<keyword id="KW-0687">Ribonucleoprotein</keyword>
<keyword id="KW-0694">RNA-binding</keyword>
<keyword id="KW-0808">Transferase</keyword>
<keyword id="KW-0832">Ubl conjugation</keyword>
<keyword id="KW-0833">Ubl conjugation pathway</keyword>
<keyword id="KW-0862">Zinc</keyword>
<keyword id="KW-0863">Zinc-finger</keyword>
<protein>
    <recommendedName>
        <fullName>E3 ubiquitin-protein ligase TRIM21</fullName>
        <ecNumber evidence="7">2.3.2.27</ecNumber>
    </recommendedName>
    <alternativeName>
        <fullName>52 kDa Ro protein</fullName>
    </alternativeName>
    <alternativeName>
        <fullName>52 kDa ribonucleoprotein autoantigen Ro/SS-A</fullName>
    </alternativeName>
    <alternativeName>
        <fullName>Ro(SS-A)</fullName>
    </alternativeName>
    <alternativeName>
        <fullName>Sjoegren syndrome type A antigen</fullName>
        <shortName>SS-A</shortName>
    </alternativeName>
    <alternativeName>
        <fullName>Tripartite motif-containing protein 21</fullName>
    </alternativeName>
</protein>
<reference key="1">
    <citation type="journal article" date="1996" name="Clin. Exp. Immunol.">
        <title>Structural differences between the human and mouse 52-kD Ro autoantigens associated with poorly conserved autoantibody activity across species.</title>
        <authorList>
            <person name="Keech C.L."/>
            <person name="Gordon T.P."/>
            <person name="McCluskey J."/>
        </authorList>
    </citation>
    <scope>NUCLEOTIDE SEQUENCE [MRNA]</scope>
    <source>
        <tissue>Macrophage</tissue>
    </source>
</reference>
<reference key="2">
    <citation type="journal article" date="2007" name="J. Immunol.">
        <title>Autoantigen Ro52 is an interferon inducible E3 ligase that ubiquitinates IRF-8 and enhances cytokine expression in macrophages.</title>
        <authorList>
            <person name="Kong H.J."/>
            <person name="Anderson D.E."/>
            <person name="Lee C.H."/>
            <person name="Jang M.K."/>
            <person name="Tamura T."/>
            <person name="Tailor P."/>
            <person name="Cho H.K."/>
            <person name="Cheong J."/>
            <person name="Xiong H."/>
            <person name="Morse H.C. III"/>
            <person name="Ozato K."/>
        </authorList>
    </citation>
    <scope>PROTEIN SEQUENCE OF 226-237; 242-252; 298-308 AND 329-340</scope>
    <scope>FUNCTION</scope>
    <scope>CATALYTIC ACTIVITY</scope>
    <scope>PATHWAY</scope>
    <scope>INTERACTION WITH IRF8</scope>
    <scope>AUTOUBIQUITINATION</scope>
    <scope>SUBCELLULAR LOCATION</scope>
    <scope>INDUCTION</scope>
    <scope>IDENTIFICATION BY MASS SPECTROMETRY</scope>
</reference>
<reference key="3">
    <citation type="journal article" date="2010" name="Cell">
        <title>A tissue-specific atlas of mouse protein phosphorylation and expression.</title>
        <authorList>
            <person name="Huttlin E.L."/>
            <person name="Jedrychowski M.P."/>
            <person name="Elias J.E."/>
            <person name="Goswami T."/>
            <person name="Rad R."/>
            <person name="Beausoleil S.A."/>
            <person name="Villen J."/>
            <person name="Haas W."/>
            <person name="Sowa M.E."/>
            <person name="Gygi S.P."/>
        </authorList>
    </citation>
    <scope>IDENTIFICATION BY MASS SPECTROMETRY [LARGE SCALE ANALYSIS]</scope>
    <source>
        <tissue>Brain</tissue>
        <tissue>Brown adipose tissue</tissue>
        <tissue>Spleen</tissue>
    </source>
</reference>
<comment type="function">
    <text evidence="2 7">E3 ubiquitin-protein ligase whose activity is dependent on E2 enzymes, UBE2D1, UBE2D2, UBE2E1 and UBE2E2 (By similarity). Forms a ubiquitin ligase complex in cooperation with the E2 UBE2D2 that is used not only for the ubiquitination of USP4 and IKBKB but also for its self-ubiquitination (By similarity). Component of cullin-RING-based SCF (SKP1-CUL1-F-box protein) E3 ubiquitin-protein ligase complexes such as SCF(SKP2)-like complexes (By similarity). A TRIM21-containing SCF(SKP2)-like complex is shown to mediate ubiquitination of CDKN1B ('Thr-187' phosphorylated-form), thereby promoting its degradation by the proteasome (By similarity). Monoubiquitinates IKBKB that will negatively regulates Tax-induced NF-kappa-B signaling (By similarity). Negatively regulates IFN-beta production post-pathogen recognition by catalyzing polyubiquitin-mediated degradation of IRF3 (By similarity). Mediates the ubiquitin-mediated proteasomal degradation of IgG1 heavy chain, which is linked to the VCP-mediated ER-associated degradation (ERAD) pathway (By similarity). Promotes IRF8 ubiquitination, which enhanced the ability of IRF8 to stimulate cytokine genes transcription in macrophages (PubMed:17579016). Plays a role in the regulation of the cell cycle progression (By similarity). Enhances the decapping activity of DCP2 (By similarity). Exists as a ribonucleoprotein particle present in all mammalian cells studied and composed of a single polypeptide and one of four small RNA molecules (By similarity). At least two isoforms are present in nucleated and red blood cells, and tissue specific differences in RO/SSA proteins have been identified (By similarity). The common feature of these proteins is their ability to bind HY RNAs.2 (By similarity). Involved in the regulation of innate immunity and the inflammatory response in response to IFNG/IFN-gamma (By similarity). Organizes autophagic machinery by serving as a platform for the assembly of ULK1, Beclin 1/BECN1 and ATG8 family members and recognizes specific autophagy targets, thus coordinating target recognition with assembly of the autophagic apparatus and initiation of autophagy (By similarity). Also regulates autophagy through FIP200/RB1CC1 ubiquitination and subsequent decreased protein stability (By similarity). Represses the innate antiviral response by facilitating the formation of the NMI-IFI35 complex through 'Lys-63'-linked ubiquitination of NMI (By similarity). During viral infection, promotes cell pyroptosis by mediating 'Lys-6'-linked ubiquitination of ISG12a/IFI27, facilitating its translocation into the mitochondria and subsequent CASP3 activation (By similarity). When up-regulated through the IFN/JAK/STAT signaling pathway, promotes 'Lys-27'-linked ubiquitination of MAVS, leading to the recruitment of TBK1 and up-regulation of innate immunity (By similarity). Mediates 'Lys-63'-linked polyubiquitination of G3BP1 in response to heat shock, leading to stress granule disassembly (By similarity).</text>
</comment>
<comment type="catalytic activity">
    <reaction evidence="7">
        <text>S-ubiquitinyl-[E2 ubiquitin-conjugating enzyme]-L-cysteine + [acceptor protein]-L-lysine = [E2 ubiquitin-conjugating enzyme]-L-cysteine + N(6)-ubiquitinyl-[acceptor protein]-L-lysine.</text>
        <dbReference type="EC" id="2.3.2.27"/>
    </reaction>
</comment>
<comment type="pathway">
    <text evidence="7">Protein modification; protein ubiquitination.</text>
</comment>
<comment type="subunit">
    <text evidence="2 7">Homotrimer (By similarity). Component of a SCF(SKP2)-like complex containing CUL1, SKP1, TRIM21 and SKP2. Interacts with CALR, CUL1, FBXW11, HSPA5, IKBKB, IRF3, SKP1 and VCP. Interacts with SKP2; the interaction with SKP2 does not depend on an intact F-box domain. Interacts (via N-terminus and C-terminus) with DCP2 (via N-terminus and C-terminus) (By similarity). Interacts (via C-terminus) with IRF8 (via C-terminus). Interacts with ULK1, BECN1 and with ATG8 family members, including GABARAP, GABARAPL1, GABARAPL2 and MAP1LC3C/LC3C. Interacts with TRIM21 and SQSTM1/sequestosome 1. Interacts with IRF3 (By similarity) (PubMed:17579016). Interacts (via the SPRY domain) with NMI (via coiled-coil domain); the interaction promotes 'Lys-63'-linked ubiquitination of NMI (By similarity). Interacts with IFI35 and NMI; the interaction facilitates NMI-IFI35 complex formation (By similarity).</text>
</comment>
<comment type="interaction">
    <interactant intactId="EBI-6840982">
        <id>Q62191</id>
    </interactant>
    <interactant intactId="EBI-2551902">
        <id>Q91VN6</id>
        <label>Ddx41</label>
    </interactant>
    <organismsDiffer>false</organismsDiffer>
    <experiments>6</experiments>
</comment>
<comment type="subcellular location">
    <subcellularLocation>
        <location evidence="7">Cytoplasm</location>
    </subcellularLocation>
    <subcellularLocation>
        <location evidence="2">Cytoplasmic vesicle</location>
        <location evidence="2">Autophagosome</location>
    </subcellularLocation>
    <subcellularLocation>
        <location evidence="7">Nucleus</location>
    </subcellularLocation>
    <subcellularLocation>
        <location evidence="2">Cytoplasm</location>
        <location evidence="2">P-body</location>
    </subcellularLocation>
    <subcellularLocation>
        <location evidence="2">Cytoplasm</location>
        <location evidence="2">Stress granule</location>
    </subcellularLocation>
    <text evidence="2">Enters the nucleus upon exposure to nitric oxide. Localizes to small dot- or rod-like structures in the cytoplasm, called processing bodies (P-bodies) that are located underneath the plasma membrane and also diffusely in the cytoplasm. They are located along the microtubules and are highly motile in cells. Colocalizes with DCP2 in P-bodies. Localizes to stress granules in response to oxidative stress.</text>
</comment>
<comment type="induction">
    <text evidence="7">Up-regulated by IFN.</text>
</comment>
<comment type="domain">
    <text evidence="2">The coiled-coil is necessary for the cytoplasmic localization.</text>
</comment>
<comment type="domain">
    <text evidence="2">The RING-type zinc finger is necessary for ubiquitination and for the IRF3-driven interferon beta promoter activity. Interacts with SKP2 and CUL1 in a RING finger-independent manner. The RING-type zinc finger is necessary for ubiquitination of NMI.</text>
</comment>
<comment type="domain">
    <text evidence="2">The B30.2/SPRY domain is necessary for the cytoplasmic localization, the interaction with IRF3 and for the IRF3-driven interferon beta promoter activity. The B30.2/SPRY domain is necessary for the interaction with NMI.</text>
</comment>
<comment type="PTM">
    <text evidence="1 7">Autoubiquitinated; does not lead to its proteasomal degradation. Deubiquitinated by USP4; leading to its stabilization (By similarity). Autoubiquitinated.</text>
</comment>
<comment type="similarity">
    <text evidence="8">Belongs to the TRIM/RBCC family.</text>
</comment>
<accession>Q62191</accession>
<feature type="chain" id="PRO_0000056116" description="E3 ubiquitin-protein ligase TRIM21">
    <location>
        <begin position="1"/>
        <end position="470"/>
    </location>
</feature>
<feature type="domain" description="B30.2/SPRY" evidence="6">
    <location>
        <begin position="272"/>
        <end position="470"/>
    </location>
</feature>
<feature type="zinc finger region" description="RING-type" evidence="5">
    <location>
        <begin position="20"/>
        <end position="59"/>
    </location>
</feature>
<feature type="zinc finger region" description="B box-type" evidence="4">
    <location>
        <begin position="96"/>
        <end position="127"/>
    </location>
</feature>
<feature type="coiled-coil region" evidence="3">
    <location>
        <begin position="188"/>
        <end position="250"/>
    </location>
</feature>
<feature type="binding site" evidence="4">
    <location>
        <position position="96"/>
    </location>
    <ligand>
        <name>Zn(2+)</name>
        <dbReference type="ChEBI" id="CHEBI:29105"/>
    </ligand>
</feature>
<feature type="binding site" evidence="4">
    <location>
        <position position="99"/>
    </location>
    <ligand>
        <name>Zn(2+)</name>
        <dbReference type="ChEBI" id="CHEBI:29105"/>
    </ligand>
</feature>
<feature type="binding site" evidence="4">
    <location>
        <position position="118"/>
    </location>
    <ligand>
        <name>Zn(2+)</name>
        <dbReference type="ChEBI" id="CHEBI:29105"/>
    </ligand>
</feature>
<feature type="binding site" evidence="4">
    <location>
        <position position="124"/>
    </location>
    <ligand>
        <name>Zn(2+)</name>
        <dbReference type="ChEBI" id="CHEBI:29105"/>
    </ligand>
</feature>
<feature type="helix" evidence="10">
    <location>
        <begin position="297"/>
        <end position="299"/>
    </location>
</feature>
<feature type="strand" evidence="10">
    <location>
        <begin position="304"/>
        <end position="306"/>
    </location>
</feature>
<feature type="strand" evidence="10">
    <location>
        <begin position="312"/>
        <end position="315"/>
    </location>
</feature>
<feature type="strand" evidence="11">
    <location>
        <begin position="326"/>
        <end position="328"/>
    </location>
</feature>
<feature type="strand" evidence="10">
    <location>
        <begin position="330"/>
        <end position="338"/>
    </location>
</feature>
<feature type="strand" evidence="10">
    <location>
        <begin position="341"/>
        <end position="351"/>
    </location>
</feature>
<feature type="strand" evidence="10">
    <location>
        <begin position="358"/>
        <end position="364"/>
    </location>
</feature>
<feature type="helix" evidence="10">
    <location>
        <begin position="377"/>
        <end position="379"/>
    </location>
</feature>
<feature type="strand" evidence="10">
    <location>
        <begin position="381"/>
        <end position="387"/>
    </location>
</feature>
<feature type="strand" evidence="10">
    <location>
        <begin position="390"/>
        <end position="393"/>
    </location>
</feature>
<feature type="strand" evidence="9">
    <location>
        <begin position="395"/>
        <end position="397"/>
    </location>
</feature>
<feature type="strand" evidence="9">
    <location>
        <begin position="399"/>
        <end position="401"/>
    </location>
</feature>
<feature type="strand" evidence="10">
    <location>
        <begin position="408"/>
        <end position="415"/>
    </location>
</feature>
<feature type="turn" evidence="10">
    <location>
        <begin position="416"/>
        <end position="419"/>
    </location>
</feature>
<feature type="strand" evidence="10">
    <location>
        <begin position="420"/>
        <end position="425"/>
    </location>
</feature>
<feature type="turn" evidence="10">
    <location>
        <begin position="426"/>
        <end position="430"/>
    </location>
</feature>
<feature type="strand" evidence="10">
    <location>
        <begin position="431"/>
        <end position="436"/>
    </location>
</feature>
<feature type="strand" evidence="10">
    <location>
        <begin position="445"/>
        <end position="450"/>
    </location>
</feature>
<feature type="strand" evidence="12">
    <location>
        <begin position="455"/>
        <end position="458"/>
    </location>
</feature>
<feature type="strand" evidence="10">
    <location>
        <begin position="463"/>
        <end position="465"/>
    </location>
</feature>
<proteinExistence type="evidence at protein level"/>